<evidence type="ECO:0000305" key="1"/>
<gene>
    <name type="ordered locus">MJ0717</name>
</gene>
<name>Y717_METJA</name>
<accession>Q58127</accession>
<dbReference type="EMBL" id="L77117">
    <property type="protein sequence ID" value="AAB98711.1"/>
    <property type="molecule type" value="Genomic_DNA"/>
</dbReference>
<dbReference type="PIR" id="E64389">
    <property type="entry name" value="E64389"/>
</dbReference>
<dbReference type="RefSeq" id="WP_010870222.1">
    <property type="nucleotide sequence ID" value="NC_000909.1"/>
</dbReference>
<dbReference type="SMR" id="Q58127"/>
<dbReference type="FunCoup" id="Q58127">
    <property type="interactions" value="111"/>
</dbReference>
<dbReference type="STRING" id="243232.MJ_0717"/>
<dbReference type="PaxDb" id="243232-MJ_0717"/>
<dbReference type="EnsemblBacteria" id="AAB98711">
    <property type="protein sequence ID" value="AAB98711"/>
    <property type="gene ID" value="MJ_0717"/>
</dbReference>
<dbReference type="GeneID" id="1451594"/>
<dbReference type="KEGG" id="mja:MJ_0717"/>
<dbReference type="eggNOG" id="arCOG00534">
    <property type="taxonomic scope" value="Archaea"/>
</dbReference>
<dbReference type="HOGENOM" id="CLU_089568_1_2_2"/>
<dbReference type="InParanoid" id="Q58127"/>
<dbReference type="OrthoDB" id="45235at2157"/>
<dbReference type="PhylomeDB" id="Q58127"/>
<dbReference type="Proteomes" id="UP000000805">
    <property type="component" value="Chromosome"/>
</dbReference>
<dbReference type="GO" id="GO:0005829">
    <property type="term" value="C:cytosol"/>
    <property type="evidence" value="ECO:0000318"/>
    <property type="project" value="GO_Central"/>
</dbReference>
<dbReference type="GO" id="GO:0006777">
    <property type="term" value="P:Mo-molybdopterin cofactor biosynthetic process"/>
    <property type="evidence" value="ECO:0007669"/>
    <property type="project" value="InterPro"/>
</dbReference>
<dbReference type="Gene3D" id="3.90.1170.40">
    <property type="entry name" value="Molybdopterin biosynthesis MoaE subunit"/>
    <property type="match status" value="1"/>
</dbReference>
<dbReference type="InterPro" id="IPR036563">
    <property type="entry name" value="MoaE_sf"/>
</dbReference>
<dbReference type="InterPro" id="IPR003448">
    <property type="entry name" value="Mopterin_biosynth_MoaE"/>
</dbReference>
<dbReference type="PANTHER" id="PTHR23404">
    <property type="entry name" value="MOLYBDOPTERIN SYNTHASE RELATED"/>
    <property type="match status" value="1"/>
</dbReference>
<dbReference type="Pfam" id="PF02391">
    <property type="entry name" value="MoaE"/>
    <property type="match status" value="1"/>
</dbReference>
<dbReference type="SUPFAM" id="SSF54690">
    <property type="entry name" value="Molybdopterin synthase subunit MoaE"/>
    <property type="match status" value="1"/>
</dbReference>
<reference key="1">
    <citation type="journal article" date="1996" name="Science">
        <title>Complete genome sequence of the methanogenic archaeon, Methanococcus jannaschii.</title>
        <authorList>
            <person name="Bult C.J."/>
            <person name="White O."/>
            <person name="Olsen G.J."/>
            <person name="Zhou L."/>
            <person name="Fleischmann R.D."/>
            <person name="Sutton G.G."/>
            <person name="Blake J.A."/>
            <person name="FitzGerald L.M."/>
            <person name="Clayton R.A."/>
            <person name="Gocayne J.D."/>
            <person name="Kerlavage A.R."/>
            <person name="Dougherty B.A."/>
            <person name="Tomb J.-F."/>
            <person name="Adams M.D."/>
            <person name="Reich C.I."/>
            <person name="Overbeek R."/>
            <person name="Kirkness E.F."/>
            <person name="Weinstock K.G."/>
            <person name="Merrick J.M."/>
            <person name="Glodek A."/>
            <person name="Scott J.L."/>
            <person name="Geoghagen N.S.M."/>
            <person name="Weidman J.F."/>
            <person name="Fuhrmann J.L."/>
            <person name="Nguyen D."/>
            <person name="Utterback T.R."/>
            <person name="Kelley J.M."/>
            <person name="Peterson J.D."/>
            <person name="Sadow P.W."/>
            <person name="Hanna M.C."/>
            <person name="Cotton M.D."/>
            <person name="Roberts K.M."/>
            <person name="Hurst M.A."/>
            <person name="Kaine B.P."/>
            <person name="Borodovsky M."/>
            <person name="Klenk H.-P."/>
            <person name="Fraser C.M."/>
            <person name="Smith H.O."/>
            <person name="Woese C.R."/>
            <person name="Venter J.C."/>
        </authorList>
    </citation>
    <scope>NUCLEOTIDE SEQUENCE [LARGE SCALE GENOMIC DNA]</scope>
    <source>
        <strain>ATCC 43067 / DSM 2661 / JAL-1 / JCM 10045 / NBRC 100440</strain>
    </source>
</reference>
<organism>
    <name type="scientific">Methanocaldococcus jannaschii (strain ATCC 43067 / DSM 2661 / JAL-1 / JCM 10045 / NBRC 100440)</name>
    <name type="common">Methanococcus jannaschii</name>
    <dbReference type="NCBI Taxonomy" id="243232"/>
    <lineage>
        <taxon>Archaea</taxon>
        <taxon>Methanobacteriati</taxon>
        <taxon>Methanobacteriota</taxon>
        <taxon>Methanomada group</taxon>
        <taxon>Methanococci</taxon>
        <taxon>Methanococcales</taxon>
        <taxon>Methanocaldococcaceae</taxon>
        <taxon>Methanocaldococcus</taxon>
    </lineage>
</organism>
<proteinExistence type="predicted"/>
<sequence length="119" mass="14062">MIFNEYEEFCKKMDECIEKYKGKFGCIVTFNGFVREYDLKDGEKVPSKGMKIDEDILEKLKLVIEEAKNKFDVIDILFYHNTGFLSIGERIASIAVFARHRKEGFEALEYIINEMKKYH</sequence>
<feature type="chain" id="PRO_0000107002" description="Uncharacterized protein MJ0717">
    <location>
        <begin position="1"/>
        <end position="119"/>
    </location>
</feature>
<protein>
    <recommendedName>
        <fullName>Uncharacterized protein MJ0717</fullName>
    </recommendedName>
</protein>
<comment type="similarity">
    <text evidence="1">To Synechocystis PCC 6803 slr0903.</text>
</comment>
<keyword id="KW-1185">Reference proteome</keyword>